<keyword id="KW-0963">Cytoplasm</keyword>
<keyword id="KW-0489">Methyltransferase</keyword>
<keyword id="KW-0694">RNA-binding</keyword>
<keyword id="KW-0698">rRNA processing</keyword>
<keyword id="KW-0949">S-adenosyl-L-methionine</keyword>
<keyword id="KW-0808">Transferase</keyword>
<evidence type="ECO:0000255" key="1">
    <source>
        <dbReference type="HAMAP-Rule" id="MF_00607"/>
    </source>
</evidence>
<comment type="function">
    <text evidence="1">Specifically dimethylates two adjacent adenosines (A1518 and A1519) in the loop of a conserved hairpin near the 3'-end of 16S rRNA in the 30S particle. May play a critical role in biogenesis of 30S subunits.</text>
</comment>
<comment type="catalytic activity">
    <reaction evidence="1">
        <text>adenosine(1518)/adenosine(1519) in 16S rRNA + 4 S-adenosyl-L-methionine = N(6)-dimethyladenosine(1518)/N(6)-dimethyladenosine(1519) in 16S rRNA + 4 S-adenosyl-L-homocysteine + 4 H(+)</text>
        <dbReference type="Rhea" id="RHEA:19609"/>
        <dbReference type="Rhea" id="RHEA-COMP:10232"/>
        <dbReference type="Rhea" id="RHEA-COMP:10233"/>
        <dbReference type="ChEBI" id="CHEBI:15378"/>
        <dbReference type="ChEBI" id="CHEBI:57856"/>
        <dbReference type="ChEBI" id="CHEBI:59789"/>
        <dbReference type="ChEBI" id="CHEBI:74411"/>
        <dbReference type="ChEBI" id="CHEBI:74493"/>
        <dbReference type="EC" id="2.1.1.182"/>
    </reaction>
</comment>
<comment type="subcellular location">
    <subcellularLocation>
        <location evidence="1">Cytoplasm</location>
    </subcellularLocation>
</comment>
<comment type="similarity">
    <text evidence="1">Belongs to the class I-like SAM-binding methyltransferase superfamily. rRNA adenine N(6)-methyltransferase family. RsmA subfamily.</text>
</comment>
<protein>
    <recommendedName>
        <fullName evidence="1">Ribosomal RNA small subunit methyltransferase A</fullName>
        <ecNumber evidence="1">2.1.1.182</ecNumber>
    </recommendedName>
    <alternativeName>
        <fullName evidence="1">16S rRNA (adenine(1518)-N(6)/adenine(1519)-N(6))-dimethyltransferase</fullName>
    </alternativeName>
    <alternativeName>
        <fullName evidence="1">16S rRNA dimethyladenosine transferase</fullName>
    </alternativeName>
    <alternativeName>
        <fullName evidence="1">16S rRNA dimethylase</fullName>
    </alternativeName>
    <alternativeName>
        <fullName evidence="1">S-adenosylmethionine-6-N', N'-adenosyl(rRNA) dimethyltransferase</fullName>
    </alternativeName>
</protein>
<name>RSMA_EHRRG</name>
<sequence length="262" mass="30226">MNDNYMINPKKELSQCFIHSTDITDKIVNYAGNISNFSIIEIGPGLGTMTYSILKKNPKKLISIEKDSRLLPIHDKIIKEFQGKYEFILSDALDIDLRNIAKPPVKVIANLPYSIATLLLIKWINYINFFHSFTLMFQKEVADRIIAQPNNKNYGTLSILTQLFADVYKMQDFGPEIFSPKPKVFSSVINIVVLPQPRFDVNYDKLRKIVKITFNQRRKMIRSTLKQITNNTDEILHSLNIPNNLRPENLSIKQFCDIANCI</sequence>
<dbReference type="EC" id="2.1.1.182" evidence="1"/>
<dbReference type="EMBL" id="CR925677">
    <property type="protein sequence ID" value="CAI27863.1"/>
    <property type="molecule type" value="Genomic_DNA"/>
</dbReference>
<dbReference type="RefSeq" id="WP_011255547.1">
    <property type="nucleotide sequence ID" value="NC_006831.1"/>
</dbReference>
<dbReference type="SMR" id="Q5FH30"/>
<dbReference type="KEGG" id="erg:ERGA_CDS_04110"/>
<dbReference type="HOGENOM" id="CLU_041220_0_1_5"/>
<dbReference type="OrthoDB" id="9814755at2"/>
<dbReference type="Proteomes" id="UP000000533">
    <property type="component" value="Chromosome"/>
</dbReference>
<dbReference type="GO" id="GO:0005737">
    <property type="term" value="C:cytoplasm"/>
    <property type="evidence" value="ECO:0007669"/>
    <property type="project" value="UniProtKB-SubCell"/>
</dbReference>
<dbReference type="GO" id="GO:0052908">
    <property type="term" value="F:16S rRNA (adenine(1518)-N(6)/adenine(1519)-N(6))-dimethyltransferase activity"/>
    <property type="evidence" value="ECO:0007669"/>
    <property type="project" value="UniProtKB-EC"/>
</dbReference>
<dbReference type="GO" id="GO:0003723">
    <property type="term" value="F:RNA binding"/>
    <property type="evidence" value="ECO:0007669"/>
    <property type="project" value="UniProtKB-KW"/>
</dbReference>
<dbReference type="CDD" id="cd02440">
    <property type="entry name" value="AdoMet_MTases"/>
    <property type="match status" value="1"/>
</dbReference>
<dbReference type="FunFam" id="1.10.8.100:FF:000001">
    <property type="entry name" value="Ribosomal RNA small subunit methyltransferase A"/>
    <property type="match status" value="1"/>
</dbReference>
<dbReference type="Gene3D" id="1.10.8.100">
    <property type="entry name" value="Ribosomal RNA adenine dimethylase-like, domain 2"/>
    <property type="match status" value="1"/>
</dbReference>
<dbReference type="Gene3D" id="3.40.50.150">
    <property type="entry name" value="Vaccinia Virus protein VP39"/>
    <property type="match status" value="1"/>
</dbReference>
<dbReference type="HAMAP" id="MF_00607">
    <property type="entry name" value="16SrRNA_methyltr_A"/>
    <property type="match status" value="1"/>
</dbReference>
<dbReference type="InterPro" id="IPR001737">
    <property type="entry name" value="KsgA/Erm"/>
</dbReference>
<dbReference type="InterPro" id="IPR023165">
    <property type="entry name" value="rRNA_Ade_diMease-like_C"/>
</dbReference>
<dbReference type="InterPro" id="IPR020596">
    <property type="entry name" value="rRNA_Ade_Mease_Trfase_CS"/>
</dbReference>
<dbReference type="InterPro" id="IPR020598">
    <property type="entry name" value="rRNA_Ade_methylase_Trfase_N"/>
</dbReference>
<dbReference type="InterPro" id="IPR011530">
    <property type="entry name" value="rRNA_adenine_dimethylase"/>
</dbReference>
<dbReference type="InterPro" id="IPR029063">
    <property type="entry name" value="SAM-dependent_MTases_sf"/>
</dbReference>
<dbReference type="NCBIfam" id="TIGR00755">
    <property type="entry name" value="ksgA"/>
    <property type="match status" value="1"/>
</dbReference>
<dbReference type="PANTHER" id="PTHR11727">
    <property type="entry name" value="DIMETHYLADENOSINE TRANSFERASE"/>
    <property type="match status" value="1"/>
</dbReference>
<dbReference type="PANTHER" id="PTHR11727:SF7">
    <property type="entry name" value="DIMETHYLADENOSINE TRANSFERASE-RELATED"/>
    <property type="match status" value="1"/>
</dbReference>
<dbReference type="Pfam" id="PF00398">
    <property type="entry name" value="RrnaAD"/>
    <property type="match status" value="1"/>
</dbReference>
<dbReference type="SMART" id="SM00650">
    <property type="entry name" value="rADc"/>
    <property type="match status" value="1"/>
</dbReference>
<dbReference type="SUPFAM" id="SSF53335">
    <property type="entry name" value="S-adenosyl-L-methionine-dependent methyltransferases"/>
    <property type="match status" value="1"/>
</dbReference>
<dbReference type="PROSITE" id="PS01131">
    <property type="entry name" value="RRNA_A_DIMETH"/>
    <property type="match status" value="1"/>
</dbReference>
<dbReference type="PROSITE" id="PS51689">
    <property type="entry name" value="SAM_RNA_A_N6_MT"/>
    <property type="match status" value="1"/>
</dbReference>
<gene>
    <name evidence="1" type="primary">rsmA</name>
    <name evidence="1" type="synonym">ksgA</name>
    <name type="ordered locus">ERGA_CDS_04110</name>
</gene>
<feature type="chain" id="PRO_0000101527" description="Ribosomal RNA small subunit methyltransferase A">
    <location>
        <begin position="1"/>
        <end position="262"/>
    </location>
</feature>
<feature type="binding site" evidence="1">
    <location>
        <position position="18"/>
    </location>
    <ligand>
        <name>S-adenosyl-L-methionine</name>
        <dbReference type="ChEBI" id="CHEBI:59789"/>
    </ligand>
</feature>
<feature type="binding site" evidence="1">
    <location>
        <position position="43"/>
    </location>
    <ligand>
        <name>S-adenosyl-L-methionine</name>
        <dbReference type="ChEBI" id="CHEBI:59789"/>
    </ligand>
</feature>
<feature type="binding site" evidence="1">
    <location>
        <position position="65"/>
    </location>
    <ligand>
        <name>S-adenosyl-L-methionine</name>
        <dbReference type="ChEBI" id="CHEBI:59789"/>
    </ligand>
</feature>
<feature type="binding site" evidence="1">
    <location>
        <position position="91"/>
    </location>
    <ligand>
        <name>S-adenosyl-L-methionine</name>
        <dbReference type="ChEBI" id="CHEBI:59789"/>
    </ligand>
</feature>
<feature type="binding site" evidence="1">
    <location>
        <position position="110"/>
    </location>
    <ligand>
        <name>S-adenosyl-L-methionine</name>
        <dbReference type="ChEBI" id="CHEBI:59789"/>
    </ligand>
</feature>
<proteinExistence type="inferred from homology"/>
<organism>
    <name type="scientific">Ehrlichia ruminantium (strain Gardel)</name>
    <dbReference type="NCBI Taxonomy" id="302409"/>
    <lineage>
        <taxon>Bacteria</taxon>
        <taxon>Pseudomonadati</taxon>
        <taxon>Pseudomonadota</taxon>
        <taxon>Alphaproteobacteria</taxon>
        <taxon>Rickettsiales</taxon>
        <taxon>Anaplasmataceae</taxon>
        <taxon>Ehrlichia</taxon>
    </lineage>
</organism>
<accession>Q5FH30</accession>
<reference key="1">
    <citation type="journal article" date="2006" name="J. Bacteriol.">
        <title>Comparative genomic analysis of three strains of Ehrlichia ruminantium reveals an active process of genome size plasticity.</title>
        <authorList>
            <person name="Frutos R."/>
            <person name="Viari A."/>
            <person name="Ferraz C."/>
            <person name="Morgat A."/>
            <person name="Eychenie S."/>
            <person name="Kandassamy Y."/>
            <person name="Chantal I."/>
            <person name="Bensaid A."/>
            <person name="Coissac E."/>
            <person name="Vachiery N."/>
            <person name="Demaille J."/>
            <person name="Martinez D."/>
        </authorList>
    </citation>
    <scope>NUCLEOTIDE SEQUENCE [LARGE SCALE GENOMIC DNA]</scope>
    <source>
        <strain>Gardel</strain>
    </source>
</reference>